<name>RL15_FLAPJ</name>
<feature type="chain" id="PRO_1000054460" description="Large ribosomal subunit protein uL15">
    <location>
        <begin position="1"/>
        <end position="150"/>
    </location>
</feature>
<feature type="region of interest" description="Disordered" evidence="2">
    <location>
        <begin position="1"/>
        <end position="52"/>
    </location>
</feature>
<feature type="compositionally biased region" description="Polar residues" evidence="2">
    <location>
        <begin position="1"/>
        <end position="15"/>
    </location>
</feature>
<feature type="compositionally biased region" description="Gly residues" evidence="2">
    <location>
        <begin position="23"/>
        <end position="32"/>
    </location>
</feature>
<reference key="1">
    <citation type="journal article" date="2007" name="Nat. Biotechnol.">
        <title>Complete genome sequence of the fish pathogen Flavobacterium psychrophilum.</title>
        <authorList>
            <person name="Duchaud E."/>
            <person name="Boussaha M."/>
            <person name="Loux V."/>
            <person name="Bernardet J.-F."/>
            <person name="Michel C."/>
            <person name="Kerouault B."/>
            <person name="Mondot S."/>
            <person name="Nicolas P."/>
            <person name="Bossy R."/>
            <person name="Caron C."/>
            <person name="Bessieres P."/>
            <person name="Gibrat J.-F."/>
            <person name="Claverol S."/>
            <person name="Dumetz F."/>
            <person name="Le Henaff M."/>
            <person name="Benmansour A."/>
        </authorList>
    </citation>
    <scope>NUCLEOTIDE SEQUENCE [LARGE SCALE GENOMIC DNA]</scope>
    <source>
        <strain>ATCC 49511 / DSM 21280 / CIP 103535 / JIP02/86</strain>
    </source>
</reference>
<dbReference type="EMBL" id="AM398681">
    <property type="protein sequence ID" value="CAL43403.1"/>
    <property type="molecule type" value="Genomic_DNA"/>
</dbReference>
<dbReference type="RefSeq" id="WP_011963451.1">
    <property type="nucleotide sequence ID" value="NC_009613.3"/>
</dbReference>
<dbReference type="RefSeq" id="YP_001296214.1">
    <property type="nucleotide sequence ID" value="NC_009613.3"/>
</dbReference>
<dbReference type="SMR" id="A6GZ80"/>
<dbReference type="STRING" id="402612.FP1320"/>
<dbReference type="EnsemblBacteria" id="CAL43403">
    <property type="protein sequence ID" value="CAL43403"/>
    <property type="gene ID" value="FP1320"/>
</dbReference>
<dbReference type="GeneID" id="66553223"/>
<dbReference type="KEGG" id="fps:FP1320"/>
<dbReference type="PATRIC" id="fig|402612.5.peg.1337"/>
<dbReference type="eggNOG" id="COG0200">
    <property type="taxonomic scope" value="Bacteria"/>
</dbReference>
<dbReference type="HOGENOM" id="CLU_055188_4_0_10"/>
<dbReference type="OrthoDB" id="9810293at2"/>
<dbReference type="Proteomes" id="UP000006394">
    <property type="component" value="Chromosome"/>
</dbReference>
<dbReference type="GO" id="GO:0022625">
    <property type="term" value="C:cytosolic large ribosomal subunit"/>
    <property type="evidence" value="ECO:0007669"/>
    <property type="project" value="TreeGrafter"/>
</dbReference>
<dbReference type="GO" id="GO:0019843">
    <property type="term" value="F:rRNA binding"/>
    <property type="evidence" value="ECO:0007669"/>
    <property type="project" value="UniProtKB-UniRule"/>
</dbReference>
<dbReference type="GO" id="GO:0003735">
    <property type="term" value="F:structural constituent of ribosome"/>
    <property type="evidence" value="ECO:0007669"/>
    <property type="project" value="InterPro"/>
</dbReference>
<dbReference type="GO" id="GO:0006412">
    <property type="term" value="P:translation"/>
    <property type="evidence" value="ECO:0007669"/>
    <property type="project" value="UniProtKB-UniRule"/>
</dbReference>
<dbReference type="Gene3D" id="3.100.10.10">
    <property type="match status" value="1"/>
</dbReference>
<dbReference type="HAMAP" id="MF_01341">
    <property type="entry name" value="Ribosomal_uL15"/>
    <property type="match status" value="1"/>
</dbReference>
<dbReference type="InterPro" id="IPR030878">
    <property type="entry name" value="Ribosomal_uL15"/>
</dbReference>
<dbReference type="InterPro" id="IPR021131">
    <property type="entry name" value="Ribosomal_uL15/eL18"/>
</dbReference>
<dbReference type="InterPro" id="IPR036227">
    <property type="entry name" value="Ribosomal_uL15/eL18_sf"/>
</dbReference>
<dbReference type="InterPro" id="IPR005749">
    <property type="entry name" value="Ribosomal_uL15_bac-type"/>
</dbReference>
<dbReference type="InterPro" id="IPR001196">
    <property type="entry name" value="Ribosomal_uL15_CS"/>
</dbReference>
<dbReference type="NCBIfam" id="TIGR01071">
    <property type="entry name" value="rplO_bact"/>
    <property type="match status" value="1"/>
</dbReference>
<dbReference type="PANTHER" id="PTHR12934">
    <property type="entry name" value="50S RIBOSOMAL PROTEIN L15"/>
    <property type="match status" value="1"/>
</dbReference>
<dbReference type="PANTHER" id="PTHR12934:SF11">
    <property type="entry name" value="LARGE RIBOSOMAL SUBUNIT PROTEIN UL15M"/>
    <property type="match status" value="1"/>
</dbReference>
<dbReference type="Pfam" id="PF00828">
    <property type="entry name" value="Ribosomal_L27A"/>
    <property type="match status" value="1"/>
</dbReference>
<dbReference type="SUPFAM" id="SSF52080">
    <property type="entry name" value="Ribosomal proteins L15p and L18e"/>
    <property type="match status" value="1"/>
</dbReference>
<dbReference type="PROSITE" id="PS00475">
    <property type="entry name" value="RIBOSOMAL_L15"/>
    <property type="match status" value="1"/>
</dbReference>
<organism>
    <name type="scientific">Flavobacterium psychrophilum (strain ATCC 49511 / DSM 21280 / CIP 103535 / JIP02/86)</name>
    <dbReference type="NCBI Taxonomy" id="402612"/>
    <lineage>
        <taxon>Bacteria</taxon>
        <taxon>Pseudomonadati</taxon>
        <taxon>Bacteroidota</taxon>
        <taxon>Flavobacteriia</taxon>
        <taxon>Flavobacteriales</taxon>
        <taxon>Flavobacteriaceae</taxon>
        <taxon>Flavobacterium</taxon>
    </lineage>
</organism>
<gene>
    <name evidence="1" type="primary">rplO</name>
    <name type="ordered locus">FP1320</name>
</gene>
<proteinExistence type="inferred from homology"/>
<accession>A6GZ80</accession>
<evidence type="ECO:0000255" key="1">
    <source>
        <dbReference type="HAMAP-Rule" id="MF_01341"/>
    </source>
</evidence>
<evidence type="ECO:0000256" key="2">
    <source>
        <dbReference type="SAM" id="MobiDB-lite"/>
    </source>
</evidence>
<evidence type="ECO:0000305" key="3"/>
<protein>
    <recommendedName>
        <fullName evidence="1">Large ribosomal subunit protein uL15</fullName>
    </recommendedName>
    <alternativeName>
        <fullName evidence="3">50S ribosomal protein L15</fullName>
    </alternativeName>
</protein>
<comment type="function">
    <text evidence="1">Binds to the 23S rRNA.</text>
</comment>
<comment type="subunit">
    <text evidence="1">Part of the 50S ribosomal subunit.</text>
</comment>
<comment type="similarity">
    <text evidence="1">Belongs to the universal ribosomal protein uL15 family.</text>
</comment>
<sequence length="150" mass="15994">MNLSNLQPAEGSTHNQNKRLGRGEGSGKGGTSARGHKGAKSRSGYSKKIGFEGGQMPLQRRVPKFGFTNINRIEYQGVNLDNLQLLVDNGIVTDTVDMAVFITSRLATKTEVVKILGRGELKAKLKVSAHKFTATAKAAIEAAGGEAIEL</sequence>
<keyword id="KW-1185">Reference proteome</keyword>
<keyword id="KW-0687">Ribonucleoprotein</keyword>
<keyword id="KW-0689">Ribosomal protein</keyword>
<keyword id="KW-0694">RNA-binding</keyword>
<keyword id="KW-0699">rRNA-binding</keyword>